<evidence type="ECO:0000256" key="1">
    <source>
        <dbReference type="SAM" id="MobiDB-lite"/>
    </source>
</evidence>
<evidence type="ECO:0000269" key="2">
    <source>
    </source>
</evidence>
<evidence type="ECO:0000269" key="3">
    <source>
    </source>
</evidence>
<evidence type="ECO:0000269" key="4">
    <source>
    </source>
</evidence>
<evidence type="ECO:0000269" key="5">
    <source>
    </source>
</evidence>
<evidence type="ECO:0000269" key="6">
    <source>
    </source>
</evidence>
<evidence type="ECO:0000269" key="7">
    <source>
    </source>
</evidence>
<evidence type="ECO:0000269" key="8">
    <source>
    </source>
</evidence>
<evidence type="ECO:0000269" key="9">
    <source>
    </source>
</evidence>
<evidence type="ECO:0000269" key="10">
    <source>
    </source>
</evidence>
<evidence type="ECO:0000269" key="11">
    <source>
    </source>
</evidence>
<evidence type="ECO:0000269" key="12">
    <source>
    </source>
</evidence>
<evidence type="ECO:0000269" key="13">
    <source>
    </source>
</evidence>
<evidence type="ECO:0000269" key="14">
    <source>
    </source>
</evidence>
<evidence type="ECO:0000269" key="15">
    <source>
    </source>
</evidence>
<evidence type="ECO:0000269" key="16">
    <source>
    </source>
</evidence>
<evidence type="ECO:0000269" key="17">
    <source>
    </source>
</evidence>
<evidence type="ECO:0000269" key="18">
    <source>
    </source>
</evidence>
<evidence type="ECO:0000269" key="19">
    <source>
    </source>
</evidence>
<evidence type="ECO:0000269" key="20">
    <source>
    </source>
</evidence>
<evidence type="ECO:0000303" key="21">
    <source>
    </source>
</evidence>
<evidence type="ECO:0000303" key="22">
    <source>
    </source>
</evidence>
<evidence type="ECO:0000305" key="23"/>
<evidence type="ECO:0007744" key="24">
    <source>
    </source>
</evidence>
<evidence type="ECO:0007829" key="25">
    <source>
        <dbReference type="PDB" id="2JSS"/>
    </source>
</evidence>
<evidence type="ECO:0007829" key="26">
    <source>
        <dbReference type="PDB" id="6AE8"/>
    </source>
</evidence>
<comment type="function">
    <text evidence="2 3 4 5 6 9 10 11 12 13 15 16 17 20">Variant histone H2A which can replace H2A in some nucleosomes. Nucleosomes wrap and compact DNA into chromatin, limiting DNA accessibility to the cellular machineries which require DNA as a template. Histones thereby play a central role in transcription regulation, DNA repair, DNA replication and chromosomal stability. DNA accessibility is regulated via a complex set of post-translational modifications of histones, also called histone code, and nucleosome remodeling. This variant is enriched at promoters, it may keep them in a repressed state until the appropriate activation signal is received (PubMed:11000274, PubMed:11081628, PubMed:11090616, PubMed:11509669, PubMed:12628191, PubMed:14645854, PubMed:14690608, PubMed:15045029, PubMed:16239142, PubMed:16344463, PubMed:16543223). Near telomeres, it may counteract gene silencing caused by the spread of heterochromatin proteins (PubMed:16543222). Required for the RNA polymerase II and SPT15/TBP recruitment to the target genes (PubMed:11509669). Involved in chromosome stability (PubMed:15353583). Required to target MPS3 to the inner membrane of the nuclear envelope (PubMed:21518795).</text>
</comment>
<comment type="subunit">
    <text evidence="5 9 10 11 14 19 20 23">The nucleosome is a histone octamer containing two molecules each of H2A, H2B, H3 and H4 assembled in one H3-H4 heterotetramer and two H2A-H2B heterodimers (Probable). The octamer wraps approximately 147 bp of DNA. H2A or its variant H2A.Z forms a heterodimer with H2B. H2A.Z associates with the VPS72/SWC2 subunit of the SWR1 chromatin remodeling complex. Also interacts with RBP1/DNA-directed RNA polymerase II largest subunit (PubMed:11509669). Interacts with NAP1 (PubMed:14645854, PubMed:14690608, PubMed:15045029, PubMed:16299513, PubMed:18086883). Interacts with MPS3 (PubMed:21518795).</text>
</comment>
<comment type="interaction">
    <interactant intactId="EBI-8080">
        <id>Q12692</id>
    </interactant>
    <interactant intactId="EBI-3493">
        <id>P35817</id>
        <label>BDF1</label>
    </interactant>
    <organismsDiffer>false</organismsDiffer>
    <experiments>6</experiments>
</comment>
<comment type="interaction">
    <interactant intactId="EBI-8080">
        <id>Q12692</id>
    </interactant>
    <interactant intactId="EBI-8064">
        <id>P53551</id>
        <label>HHO1</label>
    </interactant>
    <organismsDiffer>false</organismsDiffer>
    <experiments>3</experiments>
</comment>
<comment type="interaction">
    <interactant intactId="EBI-8080">
        <id>Q12692</id>
    </interactant>
    <interactant intactId="EBI-8080">
        <id>Q12692</id>
        <label>HTZ1</label>
    </interactant>
    <organismsDiffer>false</organismsDiffer>
    <experiments>3</experiments>
</comment>
<comment type="interaction">
    <interactant intactId="EBI-8080">
        <id>Q12692</id>
    </interactant>
    <interactant intactId="EBI-25811">
        <id>P47069</id>
        <label>MPS3</label>
    </interactant>
    <organismsDiffer>false</organismsDiffer>
    <experiments>3</experiments>
</comment>
<comment type="interaction">
    <interactant intactId="EBI-8080">
        <id>Q12692</id>
    </interactant>
    <interactant intactId="EBI-22102">
        <id>Q05471</id>
        <label>SWR1</label>
    </interactant>
    <organismsDiffer>false</organismsDiffer>
    <experiments>10</experiments>
</comment>
<comment type="interaction">
    <interactant intactId="EBI-8080">
        <id>Q12692</id>
    </interactant>
    <interactant intactId="EBI-27814">
        <id>Q03433</id>
        <label>VPS71</label>
    </interactant>
    <organismsDiffer>false</organismsDiffer>
    <experiments>7</experiments>
</comment>
<comment type="interaction">
    <interactant intactId="EBI-8080">
        <id>Q12692</id>
    </interactant>
    <interactant intactId="EBI-38035">
        <id>Q03388</id>
        <label>VPS72</label>
    </interactant>
    <organismsDiffer>false</organismsDiffer>
    <experiments>10</experiments>
</comment>
<comment type="subcellular location">
    <subcellularLocation>
        <location evidence="7">Nucleus</location>
    </subcellularLocation>
    <subcellularLocation>
        <location evidence="7">Chromosome</location>
    </subcellularLocation>
</comment>
<comment type="PTM">
    <text evidence="16 17">Acetylated by ESA1, a component of the NuA4 histone acetyltransferase (HAT) complex, and/or by GCN5, a component of the SAGA complex, to form H2A.ZK3Ac, H2A.ZK8Ac, H2A.ZK10Ac and H2A.ZK14Ac once deposited into chromatin (PubMed:16543223). Acetylation is required for function at telomeres (PubMed:16543222). H2A.ZK14Ac is acetylated at the promoters of active genes (PubMed:16543223).</text>
</comment>
<comment type="miscellaneous">
    <text evidence="8">Present with 2840 molecules/cell in log phase SD medium.</text>
</comment>
<comment type="miscellaneous">
    <text evidence="18">In contrast to H2A1 and H2A2, appears to be weakly or not sumoylated.</text>
</comment>
<comment type="similarity">
    <text evidence="23">Belongs to the histone H2A family.</text>
</comment>
<comment type="caution">
    <text evidence="23">To ensure consistency between histone entries, we follow the 'Brno' nomenclature for histone modifications, with positions referring to those used in the literature for the 'closest' model organism. Due to slight variations in histone sequences between organisms and to the presence of initiator methionine in UniProtKB/Swiss-Prot sequences, the actual positions of modified amino acids in the sequence generally differ. In this entry the following conventions are used: H2A.ZK3ac = acetylated Lys-4; H2A.ZK8ac = acetylated Lys-9; H2A.ZK10ac = acetylated Lys-11; H2A.ZK14ac = acetylated Lys-15.</text>
</comment>
<protein>
    <recommendedName>
        <fullName evidence="22">Histone H2A.Z</fullName>
    </recommendedName>
</protein>
<gene>
    <name evidence="21" type="primary">HTZ1</name>
    <name evidence="22" type="synonym">H2AZ</name>
    <name type="synonym">HTA3</name>
    <name type="ordered locus">YOL012C</name>
    <name type="ORF">O2345</name>
</gene>
<sequence length="134" mass="14283">MSGKAHGGKGKSGAKDSGSLRSQSSSARAGLQFPVGRIKRYLKRHATGRTRVGSKAAIYLTAVLEYLTAEVLELAGNAAKDLKVKRITPRHLQLAIRGDDELDSLIRATIASGGVLPHINKALLLKVEKKGSKK</sequence>
<proteinExistence type="evidence at protein level"/>
<accession>Q12692</accession>
<accession>D6W255</accession>
<keyword id="KW-0002">3D-structure</keyword>
<keyword id="KW-0007">Acetylation</keyword>
<keyword id="KW-0010">Activator</keyword>
<keyword id="KW-0156">Chromatin regulator</keyword>
<keyword id="KW-0158">Chromosome</keyword>
<keyword id="KW-0903">Direct protein sequencing</keyword>
<keyword id="KW-0238">DNA-binding</keyword>
<keyword id="KW-0544">Nucleosome core</keyword>
<keyword id="KW-0539">Nucleus</keyword>
<keyword id="KW-1185">Reference proteome</keyword>
<keyword id="KW-0804">Transcription</keyword>
<keyword id="KW-0805">Transcription regulation</keyword>
<organism>
    <name type="scientific">Saccharomyces cerevisiae (strain ATCC 204508 / S288c)</name>
    <name type="common">Baker's yeast</name>
    <dbReference type="NCBI Taxonomy" id="559292"/>
    <lineage>
        <taxon>Eukaryota</taxon>
        <taxon>Fungi</taxon>
        <taxon>Dikarya</taxon>
        <taxon>Ascomycota</taxon>
        <taxon>Saccharomycotina</taxon>
        <taxon>Saccharomycetes</taxon>
        <taxon>Saccharomycetales</taxon>
        <taxon>Saccharomycetaceae</taxon>
        <taxon>Saccharomyces</taxon>
    </lineage>
</organism>
<dbReference type="EMBL" id="Z74754">
    <property type="protein sequence ID" value="CAA99011.1"/>
    <property type="molecule type" value="Genomic_DNA"/>
</dbReference>
<dbReference type="EMBL" id="AY558000">
    <property type="protein sequence ID" value="AAS56326.1"/>
    <property type="molecule type" value="Genomic_DNA"/>
</dbReference>
<dbReference type="EMBL" id="BK006948">
    <property type="protein sequence ID" value="DAA10771.1"/>
    <property type="molecule type" value="Genomic_DNA"/>
</dbReference>
<dbReference type="PIR" id="S66694">
    <property type="entry name" value="S66694"/>
</dbReference>
<dbReference type="RefSeq" id="NP_014631.1">
    <property type="nucleotide sequence ID" value="NM_001183266.1"/>
</dbReference>
<dbReference type="PDB" id="2JSS">
    <property type="method" value="NMR"/>
    <property type="chains" value="A=23-119"/>
</dbReference>
<dbReference type="PDB" id="4M6B">
    <property type="method" value="X-ray"/>
    <property type="resolution" value="1.78 A"/>
    <property type="chains" value="A/D=23-119"/>
</dbReference>
<dbReference type="PDB" id="5J9Q">
    <property type="method" value="X-ray"/>
    <property type="resolution" value="3.25 A"/>
    <property type="chains" value="L/M/O=12-21"/>
</dbReference>
<dbReference type="PDB" id="6AE8">
    <property type="method" value="X-ray"/>
    <property type="resolution" value="1.65 A"/>
    <property type="chains" value="A/B=23-119"/>
</dbReference>
<dbReference type="PDB" id="8QZ0">
    <property type="method" value="EM"/>
    <property type="resolution" value="3.80 A"/>
    <property type="chains" value="L=1-134"/>
</dbReference>
<dbReference type="PDBsum" id="2JSS"/>
<dbReference type="PDBsum" id="4M6B"/>
<dbReference type="PDBsum" id="5J9Q"/>
<dbReference type="PDBsum" id="6AE8"/>
<dbReference type="PDBsum" id="8QZ0"/>
<dbReference type="EMDB" id="EMD-18769"/>
<dbReference type="SMR" id="Q12692"/>
<dbReference type="BioGRID" id="34392">
    <property type="interactions" value="689"/>
</dbReference>
<dbReference type="ComplexPortal" id="CPX-1613">
    <property type="entry name" value="Nucleosome, variant HTZ1-HTB1"/>
</dbReference>
<dbReference type="ComplexPortal" id="CPX-1614">
    <property type="entry name" value="Nucleosome, variant HTZ1-HTB2"/>
</dbReference>
<dbReference type="DIP" id="DIP-1381N"/>
<dbReference type="FunCoup" id="Q12692">
    <property type="interactions" value="1460"/>
</dbReference>
<dbReference type="IntAct" id="Q12692">
    <property type="interactions" value="139"/>
</dbReference>
<dbReference type="MINT" id="Q12692"/>
<dbReference type="STRING" id="4932.YOL012C"/>
<dbReference type="CarbonylDB" id="Q12692"/>
<dbReference type="iPTMnet" id="Q12692"/>
<dbReference type="PaxDb" id="4932-YOL012C"/>
<dbReference type="PeptideAtlas" id="Q12692"/>
<dbReference type="EnsemblFungi" id="YOL012C_mRNA">
    <property type="protein sequence ID" value="YOL012C"/>
    <property type="gene ID" value="YOL012C"/>
</dbReference>
<dbReference type="GeneID" id="854150"/>
<dbReference type="KEGG" id="sce:YOL012C"/>
<dbReference type="AGR" id="SGD:S000005372"/>
<dbReference type="SGD" id="S000005372">
    <property type="gene designation" value="HTZ1"/>
</dbReference>
<dbReference type="VEuPathDB" id="FungiDB:YOL012C"/>
<dbReference type="eggNOG" id="KOG1757">
    <property type="taxonomic scope" value="Eukaryota"/>
</dbReference>
<dbReference type="GeneTree" id="ENSGT00940000174660"/>
<dbReference type="HOGENOM" id="CLU_062828_2_1_1"/>
<dbReference type="InParanoid" id="Q12692"/>
<dbReference type="OMA" id="MNKKGAP"/>
<dbReference type="OrthoDB" id="9421954at2759"/>
<dbReference type="BioCyc" id="YEAST:G3O-33428-MONOMER"/>
<dbReference type="Reactome" id="R-SCE-2299718">
    <property type="pathway name" value="Condensation of Prophase Chromosomes"/>
</dbReference>
<dbReference type="Reactome" id="R-SCE-2559580">
    <property type="pathway name" value="Oxidative Stress Induced Senescence"/>
</dbReference>
<dbReference type="Reactome" id="R-SCE-427359">
    <property type="pathway name" value="SIRT1 negatively regulates rRNA expression"/>
</dbReference>
<dbReference type="Reactome" id="R-SCE-5625886">
    <property type="pathway name" value="Activated PKN1 stimulates transcription of AR (androgen receptor) regulated genes KLK2 and KLK3"/>
</dbReference>
<dbReference type="Reactome" id="R-SCE-68616">
    <property type="pathway name" value="Assembly of the ORC complex at the origin of replication"/>
</dbReference>
<dbReference type="Reactome" id="R-SCE-73772">
    <property type="pathway name" value="RNA Polymerase I Promoter Escape"/>
</dbReference>
<dbReference type="Reactome" id="R-SCE-9018519">
    <property type="pathway name" value="Estrogen-dependent gene expression"/>
</dbReference>
<dbReference type="BioGRID-ORCS" id="854150">
    <property type="hits" value="9 hits in 10 CRISPR screens"/>
</dbReference>
<dbReference type="EvolutionaryTrace" id="Q12692"/>
<dbReference type="PRO" id="PR:Q12692"/>
<dbReference type="Proteomes" id="UP000002311">
    <property type="component" value="Chromosome XV"/>
</dbReference>
<dbReference type="RNAct" id="Q12692">
    <property type="molecule type" value="protein"/>
</dbReference>
<dbReference type="GO" id="GO:0000785">
    <property type="term" value="C:chromatin"/>
    <property type="evidence" value="ECO:0000314"/>
    <property type="project" value="SGD"/>
</dbReference>
<dbReference type="GO" id="GO:0000791">
    <property type="term" value="C:euchromatin"/>
    <property type="evidence" value="ECO:0000314"/>
    <property type="project" value="UniProtKB"/>
</dbReference>
<dbReference type="GO" id="GO:0000786">
    <property type="term" value="C:nucleosome"/>
    <property type="evidence" value="ECO:0000250"/>
    <property type="project" value="ComplexPortal"/>
</dbReference>
<dbReference type="GO" id="GO:0005634">
    <property type="term" value="C:nucleus"/>
    <property type="evidence" value="ECO:0007005"/>
    <property type="project" value="SGD"/>
</dbReference>
<dbReference type="GO" id="GO:0003682">
    <property type="term" value="F:chromatin binding"/>
    <property type="evidence" value="ECO:0000314"/>
    <property type="project" value="SGD"/>
</dbReference>
<dbReference type="GO" id="GO:0031490">
    <property type="term" value="F:chromatin DNA binding"/>
    <property type="evidence" value="ECO:0000314"/>
    <property type="project" value="UniProtKB"/>
</dbReference>
<dbReference type="GO" id="GO:0042802">
    <property type="term" value="F:identical protein binding"/>
    <property type="evidence" value="ECO:0000353"/>
    <property type="project" value="IntAct"/>
</dbReference>
<dbReference type="GO" id="GO:0046982">
    <property type="term" value="F:protein heterodimerization activity"/>
    <property type="evidence" value="ECO:0007669"/>
    <property type="project" value="InterPro"/>
</dbReference>
<dbReference type="GO" id="GO:0000978">
    <property type="term" value="F:RNA polymerase II cis-regulatory region sequence-specific DNA binding"/>
    <property type="evidence" value="ECO:0000314"/>
    <property type="project" value="UniProtKB"/>
</dbReference>
<dbReference type="GO" id="GO:0030527">
    <property type="term" value="F:structural constituent of chromatin"/>
    <property type="evidence" value="ECO:0000318"/>
    <property type="project" value="GO_Central"/>
</dbReference>
<dbReference type="GO" id="GO:0006325">
    <property type="term" value="P:chromatin organization"/>
    <property type="evidence" value="ECO:0000303"/>
    <property type="project" value="ComplexPortal"/>
</dbReference>
<dbReference type="GO" id="GO:0006338">
    <property type="term" value="P:chromatin remodeling"/>
    <property type="evidence" value="ECO:0000315"/>
    <property type="project" value="SGD"/>
</dbReference>
<dbReference type="GO" id="GO:0031507">
    <property type="term" value="P:heterochromatin formation"/>
    <property type="evidence" value="ECO:0000318"/>
    <property type="project" value="GO_Central"/>
</dbReference>
<dbReference type="GO" id="GO:0070481">
    <property type="term" value="P:nuclear-transcribed mRNA catabolic process, non-stop decay"/>
    <property type="evidence" value="ECO:0000315"/>
    <property type="project" value="SGD"/>
</dbReference>
<dbReference type="GO" id="GO:0006355">
    <property type="term" value="P:regulation of DNA-templated transcription"/>
    <property type="evidence" value="ECO:0000303"/>
    <property type="project" value="ComplexPortal"/>
</dbReference>
<dbReference type="GO" id="GO:0006357">
    <property type="term" value="P:regulation of transcription by RNA polymerase II"/>
    <property type="evidence" value="ECO:0000315"/>
    <property type="project" value="SGD"/>
</dbReference>
<dbReference type="GO" id="GO:0030466">
    <property type="term" value="P:silent mating-type cassette heterochromatin formation"/>
    <property type="evidence" value="ECO:0000316"/>
    <property type="project" value="SGD"/>
</dbReference>
<dbReference type="GO" id="GO:0006368">
    <property type="term" value="P:transcription elongation by RNA polymerase II"/>
    <property type="evidence" value="ECO:0000315"/>
    <property type="project" value="SGD"/>
</dbReference>
<dbReference type="CDD" id="cd00074">
    <property type="entry name" value="HFD_H2A"/>
    <property type="match status" value="1"/>
</dbReference>
<dbReference type="FunFam" id="1.10.20.10:FF:000021">
    <property type="entry name" value="Histone H2A"/>
    <property type="match status" value="1"/>
</dbReference>
<dbReference type="Gene3D" id="1.10.20.10">
    <property type="entry name" value="Histone, subunit A"/>
    <property type="match status" value="1"/>
</dbReference>
<dbReference type="IDEAL" id="IID50226"/>
<dbReference type="InterPro" id="IPR009072">
    <property type="entry name" value="Histone-fold"/>
</dbReference>
<dbReference type="InterPro" id="IPR002119">
    <property type="entry name" value="Histone_H2A"/>
</dbReference>
<dbReference type="InterPro" id="IPR007125">
    <property type="entry name" value="Histone_H2A/H2B/H3"/>
</dbReference>
<dbReference type="InterPro" id="IPR032454">
    <property type="entry name" value="Histone_H2A_C"/>
</dbReference>
<dbReference type="InterPro" id="IPR032458">
    <property type="entry name" value="Histone_H2A_CS"/>
</dbReference>
<dbReference type="PANTHER" id="PTHR23430">
    <property type="entry name" value="HISTONE H2A"/>
    <property type="match status" value="1"/>
</dbReference>
<dbReference type="Pfam" id="PF00125">
    <property type="entry name" value="Histone"/>
    <property type="match status" value="1"/>
</dbReference>
<dbReference type="Pfam" id="PF16211">
    <property type="entry name" value="Histone_H2A_C"/>
    <property type="match status" value="1"/>
</dbReference>
<dbReference type="PRINTS" id="PR00620">
    <property type="entry name" value="HISTONEH2A"/>
</dbReference>
<dbReference type="SMART" id="SM00414">
    <property type="entry name" value="H2A"/>
    <property type="match status" value="1"/>
</dbReference>
<dbReference type="SUPFAM" id="SSF47113">
    <property type="entry name" value="Histone-fold"/>
    <property type="match status" value="1"/>
</dbReference>
<dbReference type="PROSITE" id="PS00046">
    <property type="entry name" value="HISTONE_H2A"/>
    <property type="match status" value="1"/>
</dbReference>
<reference key="1">
    <citation type="journal article" date="1997" name="Nature">
        <title>The nucleotide sequence of Saccharomyces cerevisiae chromosome XV.</title>
        <authorList>
            <person name="Dujon B."/>
            <person name="Albermann K."/>
            <person name="Aldea M."/>
            <person name="Alexandraki D."/>
            <person name="Ansorge W."/>
            <person name="Arino J."/>
            <person name="Benes V."/>
            <person name="Bohn C."/>
            <person name="Bolotin-Fukuhara M."/>
            <person name="Bordonne R."/>
            <person name="Boyer J."/>
            <person name="Camasses A."/>
            <person name="Casamayor A."/>
            <person name="Casas C."/>
            <person name="Cheret G."/>
            <person name="Cziepluch C."/>
            <person name="Daignan-Fornier B."/>
            <person name="Dang V.-D."/>
            <person name="de Haan M."/>
            <person name="Delius H."/>
            <person name="Durand P."/>
            <person name="Fairhead C."/>
            <person name="Feldmann H."/>
            <person name="Gaillon L."/>
            <person name="Galisson F."/>
            <person name="Gamo F.-J."/>
            <person name="Gancedo C."/>
            <person name="Goffeau A."/>
            <person name="Goulding S.E."/>
            <person name="Grivell L.A."/>
            <person name="Habbig B."/>
            <person name="Hand N.J."/>
            <person name="Hani J."/>
            <person name="Hattenhorst U."/>
            <person name="Hebling U."/>
            <person name="Hernando Y."/>
            <person name="Herrero E."/>
            <person name="Heumann K."/>
            <person name="Hiesel R."/>
            <person name="Hilger F."/>
            <person name="Hofmann B."/>
            <person name="Hollenberg C.P."/>
            <person name="Hughes B."/>
            <person name="Jauniaux J.-C."/>
            <person name="Kalogeropoulos A."/>
            <person name="Katsoulou C."/>
            <person name="Kordes E."/>
            <person name="Lafuente M.J."/>
            <person name="Landt O."/>
            <person name="Louis E.J."/>
            <person name="Maarse A.C."/>
            <person name="Madania A."/>
            <person name="Mannhaupt G."/>
            <person name="Marck C."/>
            <person name="Martin R.P."/>
            <person name="Mewes H.-W."/>
            <person name="Michaux G."/>
            <person name="Paces V."/>
            <person name="Parle-McDermott A.G."/>
            <person name="Pearson B.M."/>
            <person name="Perrin A."/>
            <person name="Pettersson B."/>
            <person name="Poch O."/>
            <person name="Pohl T.M."/>
            <person name="Poirey R."/>
            <person name="Portetelle D."/>
            <person name="Pujol A."/>
            <person name="Purnelle B."/>
            <person name="Ramezani Rad M."/>
            <person name="Rechmann S."/>
            <person name="Schwager C."/>
            <person name="Schweizer M."/>
            <person name="Sor F."/>
            <person name="Sterky F."/>
            <person name="Tarassov I.A."/>
            <person name="Teodoru C."/>
            <person name="Tettelin H."/>
            <person name="Thierry A."/>
            <person name="Tobiasch E."/>
            <person name="Tzermia M."/>
            <person name="Uhlen M."/>
            <person name="Unseld M."/>
            <person name="Valens M."/>
            <person name="Vandenbol M."/>
            <person name="Vetter I."/>
            <person name="Vlcek C."/>
            <person name="Voet M."/>
            <person name="Volckaert G."/>
            <person name="Voss H."/>
            <person name="Wambutt R."/>
            <person name="Wedler H."/>
            <person name="Wiemann S."/>
            <person name="Winsor B."/>
            <person name="Wolfe K.H."/>
            <person name="Zollner A."/>
            <person name="Zumstein E."/>
            <person name="Kleine K."/>
        </authorList>
    </citation>
    <scope>NUCLEOTIDE SEQUENCE [LARGE SCALE GENOMIC DNA]</scope>
    <source>
        <strain>ATCC 204508 / S288c</strain>
    </source>
</reference>
<reference key="2">
    <citation type="journal article" date="2014" name="G3 (Bethesda)">
        <title>The reference genome sequence of Saccharomyces cerevisiae: Then and now.</title>
        <authorList>
            <person name="Engel S.R."/>
            <person name="Dietrich F.S."/>
            <person name="Fisk D.G."/>
            <person name="Binkley G."/>
            <person name="Balakrishnan R."/>
            <person name="Costanzo M.C."/>
            <person name="Dwight S.S."/>
            <person name="Hitz B.C."/>
            <person name="Karra K."/>
            <person name="Nash R.S."/>
            <person name="Weng S."/>
            <person name="Wong E.D."/>
            <person name="Lloyd P."/>
            <person name="Skrzypek M.S."/>
            <person name="Miyasato S.R."/>
            <person name="Simison M."/>
            <person name="Cherry J.M."/>
        </authorList>
    </citation>
    <scope>GENOME REANNOTATION</scope>
    <source>
        <strain>ATCC 204508 / S288c</strain>
    </source>
</reference>
<reference key="3">
    <citation type="journal article" date="2007" name="Genome Res.">
        <title>Approaching a complete repository of sequence-verified protein-encoding clones for Saccharomyces cerevisiae.</title>
        <authorList>
            <person name="Hu Y."/>
            <person name="Rolfs A."/>
            <person name="Bhullar B."/>
            <person name="Murthy T.V.S."/>
            <person name="Zhu C."/>
            <person name="Berger M.F."/>
            <person name="Camargo A.A."/>
            <person name="Kelley F."/>
            <person name="McCarron S."/>
            <person name="Jepson D."/>
            <person name="Richardson A."/>
            <person name="Raphael J."/>
            <person name="Moreira D."/>
            <person name="Taycher E."/>
            <person name="Zuo D."/>
            <person name="Mohr S."/>
            <person name="Kane M.F."/>
            <person name="Williamson J."/>
            <person name="Simpson A.J.G."/>
            <person name="Bulyk M.L."/>
            <person name="Harlow E."/>
            <person name="Marsischky G."/>
            <person name="Kolodner R.D."/>
            <person name="LaBaer J."/>
        </authorList>
    </citation>
    <scope>NUCLEOTIDE SEQUENCE [GENOMIC DNA]</scope>
    <source>
        <strain>ATCC 204508 / S288c</strain>
    </source>
</reference>
<reference key="4">
    <citation type="journal article" date="2006" name="Genes Dev.">
        <title>Acetylation of H2AZ Lys 14 is associated with genome-wide gene activity in yeast.</title>
        <authorList>
            <person name="Millar C.B."/>
            <person name="Xu F."/>
            <person name="Zhang K."/>
            <person name="Grunstein M."/>
        </authorList>
    </citation>
    <scope>PROTEIN SEQUENCE OF 2-21</scope>
    <scope>ACETYLATION AT SER-2; LYS-4; LYS-9; LYS-11 AND LYS-15</scope>
    <scope>IDENTIFICATION BY MASS SPECTROMETRY</scope>
    <scope>FUNCTION</scope>
</reference>
<reference key="5">
    <citation type="journal article" date="2012" name="Proc. Natl. Acad. Sci. U.S.A.">
        <title>N-terminal acetylome analyses and functional insights of the N-terminal acetyltransferase NatB.</title>
        <authorList>
            <person name="Van Damme P."/>
            <person name="Lasa M."/>
            <person name="Polevoda B."/>
            <person name="Gazquez C."/>
            <person name="Elosegui-Artola A."/>
            <person name="Kim D.S."/>
            <person name="De Juan-Pardo E."/>
            <person name="Demeyer K."/>
            <person name="Hole K."/>
            <person name="Larrea E."/>
            <person name="Timmerman E."/>
            <person name="Prieto J."/>
            <person name="Arnesen T."/>
            <person name="Sherman F."/>
            <person name="Gevaert K."/>
            <person name="Aldabe R."/>
        </authorList>
    </citation>
    <scope>ACETYLATION [LARGE SCALE ANALYSIS] AT SER-2</scope>
    <scope>CLEAVAGE OF INITIATOR METHIONINE [LARGE SCALE ANALYSIS]</scope>
    <scope>IDENTIFICATION BY MASS SPECTROMETRY [LARGE SCALE ANALYSIS]</scope>
</reference>
<reference key="6">
    <citation type="journal article" date="1996" name="Trends Biochem. Sci.">
        <title>A likely histone H2A.F/Z variant in Saccharomyces cerevisiae.</title>
        <authorList>
            <person name="Jackson J.D."/>
            <person name="Falciano V.T."/>
            <person name="Gorovsky M.A."/>
        </authorList>
    </citation>
    <scope>SIMILARITY TO VARIANT H2A</scope>
    <scope>GENE NAME</scope>
</reference>
<reference key="7">
    <citation type="journal article" date="2000" name="Cell">
        <title>Histone H2A.Z regulates transcription and is partially redundant with nucleosome remodeling complexes.</title>
        <authorList>
            <person name="Santisteban M.S."/>
            <person name="Kalashnikova T."/>
            <person name="Smith M.M."/>
        </authorList>
    </citation>
    <scope>FUNCTION</scope>
</reference>
<reference key="8">
    <citation type="journal article" date="2000" name="Mol. Cell">
        <title>A histone variant, Htz1p, and a Sir1p-like protein, Esc2p, mediate silencing at HMR.</title>
        <authorList>
            <person name="Dhillon N."/>
            <person name="Kamakaka R.T."/>
        </authorList>
    </citation>
    <scope>FUNCTION</scope>
</reference>
<reference key="9">
    <citation type="journal article" date="2000" name="Nucleic Acids Res.">
        <title>Histone H2A.Z has a conserved function that is distinct from that of the major H2A sequence variants.</title>
        <authorList>
            <person name="Jackson J.D."/>
            <person name="Gorovsky M.A."/>
        </authorList>
    </citation>
    <scope>FUNCTION</scope>
</reference>
<reference key="10">
    <citation type="journal article" date="2001" name="Mol. Cell. Biol.">
        <title>H2A.Z is required for global chromatin integrity and for recruitment of RNA polymerase II under specific conditions.</title>
        <authorList>
            <person name="Adam M."/>
            <person name="Robert F."/>
            <person name="Larochelle M."/>
            <person name="Gaudreau L."/>
        </authorList>
    </citation>
    <scope>FUNCTION</scope>
    <scope>INTERACTION WITH RPB1</scope>
</reference>
<reference key="11">
    <citation type="journal article" date="2003" name="Cell">
        <title>Conserved histone variant H2A.Z protects euchromatin from the ectopic spread of silent heterochromatin.</title>
        <authorList>
            <person name="Meneghini M.D."/>
            <person name="Wu M."/>
            <person name="Madhani H.D."/>
        </authorList>
    </citation>
    <scope>FUNCTION</scope>
</reference>
<reference key="12">
    <citation type="journal article" date="2003" name="Mol. Cell">
        <title>A Snf2 family ATPase complex required for recruitment of the histone H2A variant Htz1.</title>
        <authorList>
            <person name="Krogan N.J."/>
            <person name="Keogh M.-C."/>
            <person name="Datta N."/>
            <person name="Sawa C."/>
            <person name="Ryan O.W."/>
            <person name="Ding H."/>
            <person name="Haw R.A."/>
            <person name="Pootoolal J."/>
            <person name="Tong A."/>
            <person name="Canadien V."/>
            <person name="Richards D.P."/>
            <person name="Wu X."/>
            <person name="Emili A."/>
            <person name="Hughes T.R."/>
            <person name="Buratowski S."/>
            <person name="Greenblatt J.F."/>
        </authorList>
    </citation>
    <scope>FUNCTION OF THE SWR1 COMPLEX</scope>
    <scope>IDENTIFICATION IN THE SWR1 COMPLEX</scope>
    <scope>IDENTIFICATION BY MASS SPECTROMETRY</scope>
</reference>
<reference key="13">
    <citation type="journal article" date="2003" name="Nature">
        <title>Global analysis of protein localization in budding yeast.</title>
        <authorList>
            <person name="Huh W.-K."/>
            <person name="Falvo J.V."/>
            <person name="Gerke L.C."/>
            <person name="Carroll A.S."/>
            <person name="Howson R.W."/>
            <person name="Weissman J.S."/>
            <person name="O'Shea E.K."/>
        </authorList>
    </citation>
    <scope>SUBCELLULAR LOCATION [LARGE SCALE ANALYSIS]</scope>
</reference>
<reference key="14">
    <citation type="journal article" date="2003" name="Nature">
        <title>Global analysis of protein expression in yeast.</title>
        <authorList>
            <person name="Ghaemmaghami S."/>
            <person name="Huh W.-K."/>
            <person name="Bower K."/>
            <person name="Howson R.W."/>
            <person name="Belle A."/>
            <person name="Dephoure N."/>
            <person name="O'Shea E.K."/>
            <person name="Weissman J.S."/>
        </authorList>
    </citation>
    <scope>LEVEL OF PROTEIN EXPRESSION [LARGE SCALE ANALYSIS]</scope>
</reference>
<reference key="15">
    <citation type="journal article" date="2004" name="PLoS Biol.">
        <title>A protein complex containing the conserved Swi2/Snf2-related ATPase Swr1p deposits histone variant H2A.Z into euchromatin.</title>
        <authorList>
            <person name="Kobor M.S."/>
            <person name="Venkatasubrahmanyam S."/>
            <person name="Meneghini M.D."/>
            <person name="Gin J.W."/>
            <person name="Jennings J.L."/>
            <person name="Link A.J."/>
            <person name="Madhani H.D."/>
            <person name="Rine J."/>
        </authorList>
    </citation>
    <scope>FUNCTION</scope>
    <scope>IDENTIFICATION IN THE SWR1 COMPLEX</scope>
    <scope>IDENTIFICATION BY MASS SPECTROMETRY</scope>
</reference>
<reference key="16">
    <citation type="journal article" date="2004" name="Proc. Natl. Acad. Sci. U.S.A.">
        <title>Regulation of chromosome stability by the histone H2A variant Htz1, the Swr1 chromatin remodeling complex, and the histone acetyltransferase NuA4.</title>
        <authorList>
            <person name="Krogan N.J."/>
            <person name="Baetz K."/>
            <person name="Keogh M.-C."/>
            <person name="Datta N."/>
            <person name="Sawa C."/>
            <person name="Kwok T.C.Y."/>
            <person name="Thompson N.J."/>
            <person name="Davey M.G."/>
            <person name="Pootoolal J."/>
            <person name="Hughes T.R."/>
            <person name="Emili A."/>
            <person name="Buratowski S."/>
            <person name="Hieter P."/>
            <person name="Greenblatt J.F."/>
        </authorList>
    </citation>
    <scope>FUNCTION</scope>
</reference>
<reference key="17">
    <citation type="journal article" date="2004" name="Science">
        <title>ATP-driven exchange of histone H2AZ variant catalyzed by SWR1 chromatin remodeling complex.</title>
        <authorList>
            <person name="Mizuguchi G."/>
            <person name="Shen X."/>
            <person name="Landry J."/>
            <person name="Wu W.-H."/>
            <person name="Sen S."/>
            <person name="Wu C."/>
        </authorList>
    </citation>
    <scope>IDENTIFICATION IN THE SWR1 COMPLEX</scope>
    <scope>FUNCTION OF THE SWR1 COMPLEX</scope>
    <scope>INTERACTION WITH HISTONE H2B</scope>
    <scope>IDENTIFICATION BY MASS SPECTROMETRY</scope>
</reference>
<reference key="18">
    <citation type="journal article" date="2005" name="Cell">
        <title>Histone variant H2A.Z marks the 5' ends of both active and inactive genes in euchromatin.</title>
        <authorList>
            <person name="Raisner R.M."/>
            <person name="Hartley P.D."/>
            <person name="Meneghini M.D."/>
            <person name="Bao M.Z."/>
            <person name="Liu C.L."/>
            <person name="Schreiber S.L."/>
            <person name="Rando O.J."/>
            <person name="Madhani H.D."/>
        </authorList>
    </citation>
    <scope>FUNCTION</scope>
</reference>
<reference key="19">
    <citation type="journal article" date="2005" name="Nat. Struct. Mol. Biol.">
        <title>Swc2 is a widely conserved H2AZ-binding module essential for ATP-dependent histone exchange.</title>
        <authorList>
            <person name="Wu W.-H."/>
            <person name="Alami S."/>
            <person name="Luk E."/>
            <person name="Wu C.-H."/>
            <person name="Sen S."/>
            <person name="Mizuguchi G."/>
            <person name="Wei D."/>
            <person name="Wu C."/>
        </authorList>
    </citation>
    <scope>INTERACTION WITH VPS72</scope>
</reference>
<reference key="20">
    <citation type="journal article" date="2005" name="Proc. Natl. Acad. Sci. U.S.A.">
        <title>Preferential occupancy of histone variant H2AZ at inactive promoters influences local histone modifications and chromatin remodeling.</title>
        <authorList>
            <person name="Li B."/>
            <person name="Pattenden S.G."/>
            <person name="Lee D."/>
            <person name="Gutierrez J."/>
            <person name="Chen J."/>
            <person name="Seidel C."/>
            <person name="Gerton J."/>
            <person name="Workman J.L."/>
        </authorList>
    </citation>
    <scope>FUNCTION</scope>
</reference>
<reference key="21">
    <citation type="journal article" date="2006" name="Genes Dev.">
        <title>Telomeric heterochromatin boundaries require NuA4-dependent acetylation of histone variant H2A.Z in Saccharomyces cerevisiae.</title>
        <authorList>
            <person name="Babiarz J.E."/>
            <person name="Halley J.E."/>
            <person name="Rine J."/>
        </authorList>
    </citation>
    <scope>ACETYLATION AT LYS-4; LYS-9; LYS-11 AND LYS-15</scope>
    <scope>IDENTIFICATION BY MASS SPECTROMETRY</scope>
    <scope>FUNCTION</scope>
</reference>
<reference key="22">
    <citation type="journal article" date="2006" name="Genes Dev.">
        <title>Histone sumoylation is a negative regulator in Saccharomyces cerevisiae and shows dynamic interplay with positive-acting histone modifications.</title>
        <authorList>
            <person name="Nathan D."/>
            <person name="Ingvarsdottir K."/>
            <person name="Sterner D.E."/>
            <person name="Bylebyl G.R."/>
            <person name="Dokmanovic M."/>
            <person name="Dorsey J.A."/>
            <person name="Whelan K.A."/>
            <person name="Krsmanovic M."/>
            <person name="Lane W.S."/>
            <person name="Meluh P.B."/>
            <person name="Johnson E.S."/>
            <person name="Berger S.L."/>
        </authorList>
    </citation>
    <scope>LACK OF SUMOYLATION</scope>
</reference>
<reference key="23">
    <citation type="journal article" date="2008" name="Mol. Cell. Biol.">
        <title>Phosphorylation by casein kinase 2 regulates Nap1 localization and function.</title>
        <authorList>
            <person name="Calvert M.E.K."/>
            <person name="Keck K.M."/>
            <person name="Ptak C."/>
            <person name="Shabanowitz J."/>
            <person name="Hunt D.F."/>
            <person name="Pemberton L.F."/>
        </authorList>
    </citation>
    <scope>INTERACTION WITH NAP1</scope>
    <scope>IDENTIFICATION BY MASS SPECTROMETRY</scope>
</reference>
<reference key="24">
    <citation type="journal article" date="2011" name="J. Cell Biol.">
        <title>Targeting of the SUN protein Mps3 to the inner nuclear membrane by the histone variant H2A.Z.</title>
        <authorList>
            <person name="Gardner J.M."/>
            <person name="Smoyer C.J."/>
            <person name="Stensrud E.S."/>
            <person name="Alexander R."/>
            <person name="Gogol M."/>
            <person name="Wiegraebe W."/>
            <person name="Jaspersen S.L."/>
        </authorList>
    </citation>
    <scope>FUNCTION</scope>
    <scope>INTERACTION WITH MPS3</scope>
</reference>
<feature type="initiator methionine" description="Removed" evidence="17 24">
    <location>
        <position position="1"/>
    </location>
</feature>
<feature type="chain" id="PRO_0000055340" description="Histone H2A.Z">
    <location>
        <begin position="2"/>
        <end position="134"/>
    </location>
</feature>
<feature type="region of interest" description="Disordered" evidence="1">
    <location>
        <begin position="1"/>
        <end position="31"/>
    </location>
</feature>
<feature type="region of interest" description="Interaction with VPS72" evidence="14">
    <location>
        <begin position="98"/>
        <end position="108"/>
    </location>
</feature>
<feature type="compositionally biased region" description="Low complexity" evidence="1">
    <location>
        <begin position="15"/>
        <end position="31"/>
    </location>
</feature>
<feature type="modified residue" description="N-acetylserine" evidence="17 24">
    <location>
        <position position="2"/>
    </location>
</feature>
<feature type="modified residue" description="N6-acetyllysine" evidence="16 17">
    <location>
        <position position="4"/>
    </location>
</feature>
<feature type="modified residue" description="N6-acetyllysine" evidence="16 17">
    <location>
        <position position="9"/>
    </location>
</feature>
<feature type="modified residue" description="N6-acetyllysine" evidence="16 17">
    <location>
        <position position="11"/>
    </location>
</feature>
<feature type="modified residue" description="N6-acetyllysine" evidence="16 17">
    <location>
        <position position="15"/>
    </location>
</feature>
<feature type="helix" evidence="26">
    <location>
        <begin position="25"/>
        <end position="28"/>
    </location>
</feature>
<feature type="helix" evidence="26">
    <location>
        <begin position="35"/>
        <end position="43"/>
    </location>
</feature>
<feature type="helix" evidence="26">
    <location>
        <begin position="54"/>
        <end position="81"/>
    </location>
</feature>
<feature type="strand" evidence="26">
    <location>
        <begin position="85"/>
        <end position="87"/>
    </location>
</feature>
<feature type="helix" evidence="26">
    <location>
        <begin position="89"/>
        <end position="97"/>
    </location>
</feature>
<feature type="helix" evidence="26">
    <location>
        <begin position="100"/>
        <end position="108"/>
    </location>
</feature>
<feature type="turn" evidence="25">
    <location>
        <begin position="111"/>
        <end position="113"/>
    </location>
</feature>
<name>H2AZ_YEAST</name>